<gene>
    <name type="primary">ycf15</name>
</gene>
<proteinExistence type="uncertain"/>
<sequence>MTHYIKKFPLMKDVNPLENQKYACRMKWLLLSVTITNHWFN</sequence>
<protein>
    <recommendedName>
        <fullName>Putative uncharacterized protein ycf15</fullName>
    </recommendedName>
</protein>
<feature type="chain" id="PRO_0000360381" description="Putative uncharacterized protein ycf15">
    <location>
        <begin position="1"/>
        <end position="41"/>
    </location>
</feature>
<keyword id="KW-0150">Chloroplast</keyword>
<keyword id="KW-0934">Plastid</keyword>
<evidence type="ECO:0000305" key="1"/>
<geneLocation type="chloroplast"/>
<organism>
    <name type="scientific">Cucumis sativus</name>
    <name type="common">Cucumber</name>
    <dbReference type="NCBI Taxonomy" id="3659"/>
    <lineage>
        <taxon>Eukaryota</taxon>
        <taxon>Viridiplantae</taxon>
        <taxon>Streptophyta</taxon>
        <taxon>Embryophyta</taxon>
        <taxon>Tracheophyta</taxon>
        <taxon>Spermatophyta</taxon>
        <taxon>Magnoliopsida</taxon>
        <taxon>eudicotyledons</taxon>
        <taxon>Gunneridae</taxon>
        <taxon>Pentapetalae</taxon>
        <taxon>rosids</taxon>
        <taxon>fabids</taxon>
        <taxon>Cucurbitales</taxon>
        <taxon>Cucurbitaceae</taxon>
        <taxon>Benincaseae</taxon>
        <taxon>Cucumis</taxon>
    </lineage>
</organism>
<accession>A5J277</accession>
<comment type="subcellular location">
    <subcellularLocation>
        <location>Plastid</location>
        <location>Chloroplast</location>
    </subcellularLocation>
</comment>
<comment type="similarity">
    <text evidence="1">Belongs to the ycf15 family.</text>
</comment>
<comment type="caution">
    <text evidence="1">Could be the product of a pseudogene.</text>
</comment>
<dbReference type="EMBL" id="DQ865976">
    <property type="protein sequence ID" value="ABI98806.1"/>
    <property type="molecule type" value="Genomic_DNA"/>
</dbReference>
<dbReference type="GO" id="GO:0009507">
    <property type="term" value="C:chloroplast"/>
    <property type="evidence" value="ECO:0007669"/>
    <property type="project" value="UniProtKB-SubCell"/>
</dbReference>
<reference key="1">
    <citation type="journal article" date="2007" name="Genome">
        <title>Sequencing cucumber (Cucumis sativus L.) chloroplast genomes identifies differences between chilling-tolerant and -susceptible cucumber lines.</title>
        <authorList>
            <person name="Chung S.-M."/>
            <person name="Gordon V.S."/>
            <person name="Staub J.E."/>
        </authorList>
    </citation>
    <scope>NUCLEOTIDE SEQUENCE [LARGE SCALE GENOMIC DNA]</scope>
    <source>
        <strain>cv. Chipper</strain>
        <strain>cv. Gy14</strain>
    </source>
</reference>
<name>YCF15_CUCSA</name>